<proteinExistence type="inferred from homology"/>
<feature type="chain" id="PRO_0000388300" description="UPF0754 membrane protein lwe2241">
    <location>
        <begin position="1"/>
        <end position="377"/>
    </location>
</feature>
<feature type="transmembrane region" description="Helical" evidence="2">
    <location>
        <begin position="1"/>
        <end position="21"/>
    </location>
</feature>
<feature type="transmembrane region" description="Helical" evidence="2">
    <location>
        <begin position="357"/>
        <end position="377"/>
    </location>
</feature>
<sequence length="377" mass="43340">MSVLFTILLMAVIGGFIGAMTNYIAIRMLFRPYKALYLFNKRVPFTPGLIPKRRDELAEHIGKVVVSHLLTEDAIRARLLEENLQKEITETVAKMFHEKMQLETTPNELLHQLGYENAEGRSISWLETVLEKEINHFLTIKKTSQMNELIPVMLEKELETKLPHVTERITSKLTLFIASEEGKLQIKMMLQKFFEEHGKMGSMARMFINVESFSEKIQQEGAKLINQEDTKNLINQLLTTEWKNFEAKELQELIPTEKQAHLAEQLTSEIIQAFPHDKIFNQPVQVILRDYEVMIKSKIIPFAVERMLDFVATHSADIVERMDLAKLVETQIATFSLQEIEKLVVEISGRELKMITYLGGILGGFIGVIQGILAIWI</sequence>
<dbReference type="EMBL" id="AM263198">
    <property type="protein sequence ID" value="CAK21659.1"/>
    <property type="molecule type" value="Genomic_DNA"/>
</dbReference>
<dbReference type="RefSeq" id="WP_011702992.1">
    <property type="nucleotide sequence ID" value="NC_008555.1"/>
</dbReference>
<dbReference type="SMR" id="A0AKX7"/>
<dbReference type="STRING" id="386043.lwe2241"/>
<dbReference type="GeneID" id="61190144"/>
<dbReference type="KEGG" id="lwe:lwe2241"/>
<dbReference type="eggNOG" id="COG4399">
    <property type="taxonomic scope" value="Bacteria"/>
</dbReference>
<dbReference type="HOGENOM" id="CLU_042384_0_0_9"/>
<dbReference type="OrthoDB" id="9787430at2"/>
<dbReference type="Proteomes" id="UP000000779">
    <property type="component" value="Chromosome"/>
</dbReference>
<dbReference type="GO" id="GO:0005886">
    <property type="term" value="C:plasma membrane"/>
    <property type="evidence" value="ECO:0007669"/>
    <property type="project" value="UniProtKB-SubCell"/>
</dbReference>
<dbReference type="InterPro" id="IPR007383">
    <property type="entry name" value="DUF445"/>
</dbReference>
<dbReference type="InterPro" id="IPR016991">
    <property type="entry name" value="UCP032178"/>
</dbReference>
<dbReference type="PANTHER" id="PTHR35791">
    <property type="entry name" value="UPF0754 MEMBRANE PROTEIN YHEB"/>
    <property type="match status" value="1"/>
</dbReference>
<dbReference type="PANTHER" id="PTHR35791:SF1">
    <property type="entry name" value="UPF0754 MEMBRANE PROTEIN YHEB"/>
    <property type="match status" value="1"/>
</dbReference>
<dbReference type="Pfam" id="PF04286">
    <property type="entry name" value="DUF445"/>
    <property type="match status" value="1"/>
</dbReference>
<dbReference type="PIRSF" id="PIRSF032178">
    <property type="entry name" value="UCP032178"/>
    <property type="match status" value="1"/>
</dbReference>
<evidence type="ECO:0000250" key="1"/>
<evidence type="ECO:0000255" key="2"/>
<evidence type="ECO:0000305" key="3"/>
<name>Y2241_LISW6</name>
<organism>
    <name type="scientific">Listeria welshimeri serovar 6b (strain ATCC 35897 / DSM 20650 / CCUG 15529 / CIP 8149 / NCTC 11857 / SLCC 5334 / V8)</name>
    <dbReference type="NCBI Taxonomy" id="386043"/>
    <lineage>
        <taxon>Bacteria</taxon>
        <taxon>Bacillati</taxon>
        <taxon>Bacillota</taxon>
        <taxon>Bacilli</taxon>
        <taxon>Bacillales</taxon>
        <taxon>Listeriaceae</taxon>
        <taxon>Listeria</taxon>
    </lineage>
</organism>
<reference key="1">
    <citation type="journal article" date="2006" name="J. Bacteriol.">
        <title>Whole-genome sequence of Listeria welshimeri reveals common steps in genome reduction with Listeria innocua as compared to Listeria monocytogenes.</title>
        <authorList>
            <person name="Hain T."/>
            <person name="Steinweg C."/>
            <person name="Kuenne C.T."/>
            <person name="Billion A."/>
            <person name="Ghai R."/>
            <person name="Chatterjee S.S."/>
            <person name="Domann E."/>
            <person name="Kaerst U."/>
            <person name="Goesmann A."/>
            <person name="Bekel T."/>
            <person name="Bartels D."/>
            <person name="Kaiser O."/>
            <person name="Meyer F."/>
            <person name="Puehler A."/>
            <person name="Weisshaar B."/>
            <person name="Wehland J."/>
            <person name="Liang C."/>
            <person name="Dandekar T."/>
            <person name="Lampidis R."/>
            <person name="Kreft J."/>
            <person name="Goebel W."/>
            <person name="Chakraborty T."/>
        </authorList>
    </citation>
    <scope>NUCLEOTIDE SEQUENCE [LARGE SCALE GENOMIC DNA]</scope>
    <source>
        <strain>ATCC 35897 / DSM 20650 / CCUG 15529 / CIP 8149 / NCTC 11857 / SLCC 5334 / V8</strain>
    </source>
</reference>
<accession>A0AKX7</accession>
<keyword id="KW-1003">Cell membrane</keyword>
<keyword id="KW-0472">Membrane</keyword>
<keyword id="KW-0812">Transmembrane</keyword>
<keyword id="KW-1133">Transmembrane helix</keyword>
<comment type="subcellular location">
    <subcellularLocation>
        <location evidence="1">Cell membrane</location>
        <topology evidence="1">Multi-pass membrane protein</topology>
    </subcellularLocation>
</comment>
<comment type="similarity">
    <text evidence="3">Belongs to the UPF0754 family.</text>
</comment>
<protein>
    <recommendedName>
        <fullName>UPF0754 membrane protein lwe2241</fullName>
    </recommendedName>
</protein>
<gene>
    <name type="ordered locus">lwe2241</name>
</gene>